<feature type="chain" id="PRO_0000356772" description="Large ribosomal subunit protein bL33">
    <location>
        <begin position="1"/>
        <end position="50"/>
    </location>
</feature>
<dbReference type="EMBL" id="AP009510">
    <property type="protein sequence ID" value="BAG13711.1"/>
    <property type="molecule type" value="Genomic_DNA"/>
</dbReference>
<dbReference type="RefSeq" id="WP_015423238.1">
    <property type="nucleotide sequence ID" value="NC_020419.1"/>
</dbReference>
<dbReference type="SMR" id="B1GZM9"/>
<dbReference type="STRING" id="471821.TGRD_228"/>
<dbReference type="KEGG" id="eti:RSTT_202"/>
<dbReference type="KEGG" id="rsd:TGRD_228"/>
<dbReference type="HOGENOM" id="CLU_190949_0_1_0"/>
<dbReference type="OrthoDB" id="9801333at2"/>
<dbReference type="Proteomes" id="UP000001691">
    <property type="component" value="Chromosome"/>
</dbReference>
<dbReference type="GO" id="GO:0005737">
    <property type="term" value="C:cytoplasm"/>
    <property type="evidence" value="ECO:0007669"/>
    <property type="project" value="UniProtKB-ARBA"/>
</dbReference>
<dbReference type="GO" id="GO:1990904">
    <property type="term" value="C:ribonucleoprotein complex"/>
    <property type="evidence" value="ECO:0007669"/>
    <property type="project" value="UniProtKB-KW"/>
</dbReference>
<dbReference type="GO" id="GO:0005840">
    <property type="term" value="C:ribosome"/>
    <property type="evidence" value="ECO:0007669"/>
    <property type="project" value="UniProtKB-KW"/>
</dbReference>
<dbReference type="GO" id="GO:0003735">
    <property type="term" value="F:structural constituent of ribosome"/>
    <property type="evidence" value="ECO:0007669"/>
    <property type="project" value="InterPro"/>
</dbReference>
<dbReference type="GO" id="GO:0006412">
    <property type="term" value="P:translation"/>
    <property type="evidence" value="ECO:0007669"/>
    <property type="project" value="UniProtKB-UniRule"/>
</dbReference>
<dbReference type="Gene3D" id="2.20.28.120">
    <property type="entry name" value="Ribosomal protein L33"/>
    <property type="match status" value="1"/>
</dbReference>
<dbReference type="HAMAP" id="MF_00294">
    <property type="entry name" value="Ribosomal_bL33"/>
    <property type="match status" value="1"/>
</dbReference>
<dbReference type="InterPro" id="IPR001705">
    <property type="entry name" value="Ribosomal_bL33"/>
</dbReference>
<dbReference type="InterPro" id="IPR038584">
    <property type="entry name" value="Ribosomal_bL33_sf"/>
</dbReference>
<dbReference type="InterPro" id="IPR011332">
    <property type="entry name" value="Ribosomal_zn-bd"/>
</dbReference>
<dbReference type="NCBIfam" id="NF001764">
    <property type="entry name" value="PRK00504.1"/>
    <property type="match status" value="1"/>
</dbReference>
<dbReference type="NCBIfam" id="TIGR01023">
    <property type="entry name" value="rpmG_bact"/>
    <property type="match status" value="1"/>
</dbReference>
<dbReference type="Pfam" id="PF00471">
    <property type="entry name" value="Ribosomal_L33"/>
    <property type="match status" value="1"/>
</dbReference>
<dbReference type="SUPFAM" id="SSF57829">
    <property type="entry name" value="Zn-binding ribosomal proteins"/>
    <property type="match status" value="1"/>
</dbReference>
<organism>
    <name type="scientific">Endomicrobium trichonymphae</name>
    <dbReference type="NCBI Taxonomy" id="1408204"/>
    <lineage>
        <taxon>Bacteria</taxon>
        <taxon>Pseudomonadati</taxon>
        <taxon>Elusimicrobiota</taxon>
        <taxon>Endomicrobiia</taxon>
        <taxon>Endomicrobiales</taxon>
        <taxon>Endomicrobiaceae</taxon>
        <taxon>Candidatus Endomicrobiellum</taxon>
    </lineage>
</organism>
<evidence type="ECO:0000255" key="1">
    <source>
        <dbReference type="HAMAP-Rule" id="MF_00294"/>
    </source>
</evidence>
<evidence type="ECO:0000305" key="2"/>
<proteinExistence type="inferred from homology"/>
<gene>
    <name evidence="1" type="primary">rpmG</name>
    <name type="ordered locus">TGRD_228</name>
</gene>
<keyword id="KW-0687">Ribonucleoprotein</keyword>
<keyword id="KW-0689">Ribosomal protein</keyword>
<sequence length="50" mass="5862">MAERVIITLACSVCKNRNYYFDRAKNHEGKLALKKFCKNCGKRTDHKETK</sequence>
<comment type="similarity">
    <text evidence="1">Belongs to the bacterial ribosomal protein bL33 family.</text>
</comment>
<reference key="1">
    <citation type="journal article" date="2008" name="Proc. Natl. Acad. Sci. U.S.A.">
        <title>Complete genome of the uncultured termite group 1 bacteria in a single host protist cell.</title>
        <authorList>
            <person name="Hongoh Y."/>
            <person name="Sharma V.K."/>
            <person name="Prakash T."/>
            <person name="Noda S."/>
            <person name="Taylor T.D."/>
            <person name="Kudo T."/>
            <person name="Sakaki Y."/>
            <person name="Toyoda A."/>
            <person name="Hattori M."/>
            <person name="Ohkuma M."/>
        </authorList>
    </citation>
    <scope>NUCLEOTIDE SEQUENCE [LARGE SCALE GENOMIC DNA]</scope>
</reference>
<accession>B1GZM9</accession>
<name>RL33_ENDTX</name>
<protein>
    <recommendedName>
        <fullName evidence="1">Large ribosomal subunit protein bL33</fullName>
    </recommendedName>
    <alternativeName>
        <fullName evidence="2">50S ribosomal protein L33</fullName>
    </alternativeName>
</protein>